<proteinExistence type="inferred from homology"/>
<sequence>MSSNFDKFQKRRLISSYFSVVLSVFLVLFLLGVLGLFIINSKKLADDFKEKIAMTVFFKNEANDSIIKAFNSELKRAPFALSYVYVTKEKAAKEHTDIIGEDFLTFLGENPLLNSYDIHLKADYVERDSILKIESALRKNTMIEDIVYDKQLVNLVNDNIKKVSMWILIISGFLTVIAVLLINSSLRLSIHSNRFIIKTMQMVGATKSFIRKPFVMRSVKLGMLGALLAIIALIGLLFYVETNFPGLGILEDKALIGLVLLAVFGLGVLITWVSTHFATQRFLNLRTDDLY</sequence>
<name>FTSX_FLAJ1</name>
<reference evidence="4" key="1">
    <citation type="journal article" date="2000" name="J. Bacteriol.">
        <title>Transposon insertions in the Flavobacterium johnsoniae ftsX gene disrupt gliding motility and cell division.</title>
        <authorList>
            <person name="Kempf M.J."/>
            <person name="McBride M.J."/>
        </authorList>
    </citation>
    <scope>NUCLEOTIDE SEQUENCE [GENOMIC DNA]</scope>
    <scope>FUNCTION</scope>
    <scope>DISRUPTION PHENOTYPE</scope>
    <source>
        <strain evidence="4">ATCC 17061 / DSM 2064 / JCM 8514 / BCRC 14874 / CCUG 350202 / NBRC 14942 / NCIMB 11054 / UW101</strain>
    </source>
</reference>
<reference key="2">
    <citation type="journal article" date="2009" name="Appl. Environ. Microbiol.">
        <title>Novel features of the polysaccharide-digesting gliding bacterium Flavobacterium johnsoniae as revealed by genome sequence analysis.</title>
        <authorList>
            <person name="McBride M.J."/>
            <person name="Xie G."/>
            <person name="Martens E.C."/>
            <person name="Lapidus A."/>
            <person name="Henrissat B."/>
            <person name="Rhodes R.G."/>
            <person name="Goltsman E."/>
            <person name="Wang W."/>
            <person name="Xu J."/>
            <person name="Hunnicutt D.W."/>
            <person name="Staroscik A.M."/>
            <person name="Hoover T.R."/>
            <person name="Cheng Y.Q."/>
            <person name="Stein J.L."/>
        </authorList>
    </citation>
    <scope>NUCLEOTIDE SEQUENCE [LARGE SCALE GENOMIC DNA]</scope>
    <source>
        <strain>ATCC 17061 / DSM 2064 / JCM 8514 / BCRC 14874 / CCUG 350202 / NBRC 14942 / NCIMB 11054 / UW101</strain>
    </source>
</reference>
<gene>
    <name evidence="5" type="primary">ftsX</name>
    <name type="ordered locus">Fjoh_0567</name>
</gene>
<evidence type="ECO:0000250" key="1">
    <source>
        <dbReference type="UniProtKB" id="P0AC30"/>
    </source>
</evidence>
<evidence type="ECO:0000255" key="2"/>
<evidence type="ECO:0000269" key="3">
    <source>
    </source>
</evidence>
<evidence type="ECO:0000312" key="4">
    <source>
        <dbReference type="EMBL" id="AAD50460.1"/>
    </source>
</evidence>
<evidence type="ECO:0000312" key="5">
    <source>
        <dbReference type="EMBL" id="ABQ03602.1"/>
    </source>
</evidence>
<dbReference type="EMBL" id="AF169967">
    <property type="protein sequence ID" value="AAD50460.1"/>
    <property type="molecule type" value="Genomic_DNA"/>
</dbReference>
<dbReference type="EMBL" id="CP000685">
    <property type="protein sequence ID" value="ABQ03602.1"/>
    <property type="molecule type" value="Genomic_DNA"/>
</dbReference>
<dbReference type="RefSeq" id="WP_012022658.1">
    <property type="nucleotide sequence ID" value="NC_009441.1"/>
</dbReference>
<dbReference type="SMR" id="A5FMG4"/>
<dbReference type="STRING" id="376686.Fjoh_0567"/>
<dbReference type="KEGG" id="fjo:Fjoh_0567"/>
<dbReference type="eggNOG" id="COG2177">
    <property type="taxonomic scope" value="Bacteria"/>
</dbReference>
<dbReference type="HOGENOM" id="CLU_073546_3_0_10"/>
<dbReference type="OrthoDB" id="9813411at2"/>
<dbReference type="Proteomes" id="UP000006694">
    <property type="component" value="Chromosome"/>
</dbReference>
<dbReference type="GO" id="GO:0009276">
    <property type="term" value="C:Gram-negative-bacterium-type cell wall"/>
    <property type="evidence" value="ECO:0000250"/>
    <property type="project" value="UniProtKB"/>
</dbReference>
<dbReference type="GO" id="GO:0005886">
    <property type="term" value="C:plasma membrane"/>
    <property type="evidence" value="ECO:0007669"/>
    <property type="project" value="UniProtKB-SubCell"/>
</dbReference>
<dbReference type="GO" id="GO:0051301">
    <property type="term" value="P:cell division"/>
    <property type="evidence" value="ECO:0000315"/>
    <property type="project" value="UniProtKB"/>
</dbReference>
<dbReference type="GO" id="GO:0071976">
    <property type="term" value="P:cell gliding"/>
    <property type="evidence" value="ECO:0000315"/>
    <property type="project" value="UniProtKB"/>
</dbReference>
<dbReference type="GO" id="GO:0009615">
    <property type="term" value="P:response to virus"/>
    <property type="evidence" value="ECO:0000315"/>
    <property type="project" value="UniProtKB"/>
</dbReference>
<dbReference type="Gene3D" id="3.30.70.3040">
    <property type="match status" value="1"/>
</dbReference>
<dbReference type="InterPro" id="IPR003838">
    <property type="entry name" value="ABC3_permease_C"/>
</dbReference>
<dbReference type="InterPro" id="IPR004513">
    <property type="entry name" value="FtsX"/>
</dbReference>
<dbReference type="InterPro" id="IPR040690">
    <property type="entry name" value="FtsX_ECD"/>
</dbReference>
<dbReference type="PANTHER" id="PTHR47755">
    <property type="entry name" value="CELL DIVISION PROTEIN FTSX"/>
    <property type="match status" value="1"/>
</dbReference>
<dbReference type="PANTHER" id="PTHR47755:SF1">
    <property type="entry name" value="CELL DIVISION PROTEIN FTSX"/>
    <property type="match status" value="1"/>
</dbReference>
<dbReference type="Pfam" id="PF02687">
    <property type="entry name" value="FtsX"/>
    <property type="match status" value="1"/>
</dbReference>
<dbReference type="Pfam" id="PF18075">
    <property type="entry name" value="FtsX_ECD"/>
    <property type="match status" value="1"/>
</dbReference>
<dbReference type="PIRSF" id="PIRSF003097">
    <property type="entry name" value="FtsX"/>
    <property type="match status" value="1"/>
</dbReference>
<accession>A5FMG4</accession>
<accession>Q9RB39</accession>
<keyword id="KW-0131">Cell cycle</keyword>
<keyword id="KW-0132">Cell division</keyword>
<keyword id="KW-0997">Cell inner membrane</keyword>
<keyword id="KW-1003">Cell membrane</keyword>
<keyword id="KW-0472">Membrane</keyword>
<keyword id="KW-0812">Transmembrane</keyword>
<keyword id="KW-1133">Transmembrane helix</keyword>
<protein>
    <recommendedName>
        <fullName evidence="1 5">Cell division protein FtsX</fullName>
    </recommendedName>
</protein>
<feature type="chain" id="PRO_0000421661" description="Cell division protein FtsX">
    <location>
        <begin position="1"/>
        <end position="291"/>
    </location>
</feature>
<feature type="topological domain" description="Cytoplasmic" evidence="1 2">
    <location>
        <begin position="1"/>
        <end position="18"/>
    </location>
</feature>
<feature type="transmembrane region" description="Helical" evidence="2">
    <location>
        <begin position="19"/>
        <end position="39"/>
    </location>
</feature>
<feature type="topological domain" description="Periplasmic" evidence="2">
    <location>
        <begin position="40"/>
        <end position="162"/>
    </location>
</feature>
<feature type="transmembrane region" description="Helical" evidence="2">
    <location>
        <begin position="163"/>
        <end position="183"/>
    </location>
</feature>
<feature type="topological domain" description="Cytoplasmic" evidence="1 2">
    <location>
        <begin position="184"/>
        <end position="220"/>
    </location>
</feature>
<feature type="transmembrane region" description="Helical" evidence="2">
    <location>
        <begin position="221"/>
        <end position="241"/>
    </location>
</feature>
<feature type="topological domain" description="Periplasmic" evidence="2">
    <location>
        <begin position="242"/>
        <end position="253"/>
    </location>
</feature>
<feature type="transmembrane region" description="Helical" evidence="2">
    <location>
        <begin position="254"/>
        <end position="274"/>
    </location>
</feature>
<feature type="topological domain" description="Cytoplasmic" evidence="1 2">
    <location>
        <begin position="275"/>
        <end position="291"/>
    </location>
</feature>
<organism>
    <name type="scientific">Flavobacterium johnsoniae (strain ATCC 17061 / DSM 2064 / JCM 8514 / BCRC 14874 / CCUG 350202 / NBRC 14942 / NCIMB 11054 / UW101)</name>
    <name type="common">Cytophaga johnsonae</name>
    <dbReference type="NCBI Taxonomy" id="376686"/>
    <lineage>
        <taxon>Bacteria</taxon>
        <taxon>Pseudomonadati</taxon>
        <taxon>Bacteroidota</taxon>
        <taxon>Flavobacteriia</taxon>
        <taxon>Flavobacteriales</taxon>
        <taxon>Flavobacteriaceae</taxon>
        <taxon>Flavobacterium</taxon>
    </lineage>
</organism>
<comment type="function">
    <text evidence="3">Required for cell division and gliding motility.</text>
</comment>
<comment type="subcellular location">
    <subcellularLocation>
        <location evidence="1">Cell inner membrane</location>
        <topology evidence="1">Multi-pass membrane protein</topology>
    </subcellularLocation>
</comment>
<comment type="disruption phenotype">
    <text evidence="3">Filamentous cell morphology and multiple septa. Filaments cross walls but cells fail to separate. Gliding motility defects. Resistant to infection by a number of F.johnsoniae bacteriophages.</text>
</comment>
<comment type="similarity">
    <text evidence="2">Belongs to the ABC-4 integral membrane protein family. FtsX subfamily.</text>
</comment>